<feature type="chain" id="PRO_0000285304" description="DNA damage-inducible protein 1">
    <location>
        <begin position="1"/>
        <end position="472"/>
    </location>
</feature>
<feature type="domain" description="Ubiquitin-like">
    <location>
        <begin position="1"/>
        <end position="72"/>
    </location>
</feature>
<feature type="domain" description="UBA" evidence="4">
    <location>
        <begin position="434"/>
        <end position="472"/>
    </location>
</feature>
<feature type="region of interest" description="Disordered" evidence="5">
    <location>
        <begin position="388"/>
        <end position="410"/>
    </location>
</feature>
<feature type="compositionally biased region" description="Polar residues" evidence="5">
    <location>
        <begin position="393"/>
        <end position="404"/>
    </location>
</feature>
<feature type="active site" evidence="6">
    <location>
        <position position="279"/>
    </location>
</feature>
<accession>Q754R2</accession>
<comment type="function">
    <text evidence="2 3">Probable aspartic protease. May be involved in the regulation of exocytosis. Acts as a linker between the 19S proteasome and polyubiquitinated proteins via UBA domain interactions with ubiquitin for their subsequent degradation. Required for S-phase checkpoint control.</text>
</comment>
<comment type="subunit">
    <text evidence="1">Binds ubiquitin and polyubiquitinated proteins.</text>
</comment>
<comment type="subcellular location">
    <subcellularLocation>
        <location evidence="1">Cytoplasm</location>
    </subcellularLocation>
</comment>
<comment type="similarity">
    <text evidence="6">Belongs to the DDI1 family.</text>
</comment>
<proteinExistence type="inferred from homology"/>
<keyword id="KW-0064">Aspartyl protease</keyword>
<keyword id="KW-0963">Cytoplasm</keyword>
<keyword id="KW-0378">Hydrolase</keyword>
<keyword id="KW-0645">Protease</keyword>
<keyword id="KW-0653">Protein transport</keyword>
<keyword id="KW-1185">Reference proteome</keyword>
<keyword id="KW-0813">Transport</keyword>
<reference key="1">
    <citation type="journal article" date="2004" name="Science">
        <title>The Ashbya gossypii genome as a tool for mapping the ancient Saccharomyces cerevisiae genome.</title>
        <authorList>
            <person name="Dietrich F.S."/>
            <person name="Voegeli S."/>
            <person name="Brachat S."/>
            <person name="Lerch A."/>
            <person name="Gates K."/>
            <person name="Steiner S."/>
            <person name="Mohr C."/>
            <person name="Poehlmann R."/>
            <person name="Luedi P."/>
            <person name="Choi S."/>
            <person name="Wing R.A."/>
            <person name="Flavier A."/>
            <person name="Gaffney T.D."/>
            <person name="Philippsen P."/>
        </authorList>
    </citation>
    <scope>NUCLEOTIDE SEQUENCE [LARGE SCALE GENOMIC DNA]</scope>
    <source>
        <strain>ATCC 10895 / CBS 109.51 / FGSC 9923 / NRRL Y-1056</strain>
    </source>
</reference>
<reference key="2">
    <citation type="journal article" date="2013" name="G3 (Bethesda)">
        <title>Genomes of Ashbya fungi isolated from insects reveal four mating-type loci, numerous translocations, lack of transposons, and distinct gene duplications.</title>
        <authorList>
            <person name="Dietrich F.S."/>
            <person name="Voegeli S."/>
            <person name="Kuo S."/>
            <person name="Philippsen P."/>
        </authorList>
    </citation>
    <scope>GENOME REANNOTATION</scope>
    <source>
        <strain>ATCC 10895 / CBS 109.51 / FGSC 9923 / NRRL Y-1056</strain>
    </source>
</reference>
<evidence type="ECO:0000250" key="1"/>
<evidence type="ECO:0000250" key="2">
    <source>
        <dbReference type="UniProtKB" id="I7HUG0"/>
    </source>
</evidence>
<evidence type="ECO:0000250" key="3">
    <source>
        <dbReference type="UniProtKB" id="P40087"/>
    </source>
</evidence>
<evidence type="ECO:0000255" key="4">
    <source>
        <dbReference type="PROSITE-ProRule" id="PRU00212"/>
    </source>
</evidence>
<evidence type="ECO:0000256" key="5">
    <source>
        <dbReference type="SAM" id="MobiDB-lite"/>
    </source>
</evidence>
<evidence type="ECO:0000305" key="6"/>
<dbReference type="EC" id="3.4.23.-" evidence="2"/>
<dbReference type="EMBL" id="AE016819">
    <property type="protein sequence ID" value="AAS53381.1"/>
    <property type="molecule type" value="Genomic_DNA"/>
</dbReference>
<dbReference type="RefSeq" id="NP_985557.1">
    <property type="nucleotide sequence ID" value="NM_210911.1"/>
</dbReference>
<dbReference type="SMR" id="Q754R2"/>
<dbReference type="FunCoup" id="Q754R2">
    <property type="interactions" value="286"/>
</dbReference>
<dbReference type="STRING" id="284811.Q754R2"/>
<dbReference type="MEROPS" id="A28.001"/>
<dbReference type="EnsemblFungi" id="AAS53381">
    <property type="protein sequence ID" value="AAS53381"/>
    <property type="gene ID" value="AGOS_AFR010C"/>
</dbReference>
<dbReference type="GeneID" id="4621796"/>
<dbReference type="KEGG" id="ago:AGOS_AFR010C"/>
<dbReference type="eggNOG" id="KOG0012">
    <property type="taxonomic scope" value="Eukaryota"/>
</dbReference>
<dbReference type="HOGENOM" id="CLU_020435_2_0_1"/>
<dbReference type="InParanoid" id="Q754R2"/>
<dbReference type="OMA" id="NTHTRHP"/>
<dbReference type="OrthoDB" id="1047367at2759"/>
<dbReference type="Proteomes" id="UP000000591">
    <property type="component" value="Chromosome VI"/>
</dbReference>
<dbReference type="GO" id="GO:0005737">
    <property type="term" value="C:cytoplasm"/>
    <property type="evidence" value="ECO:0007669"/>
    <property type="project" value="UniProtKB-SubCell"/>
</dbReference>
<dbReference type="GO" id="GO:0005886">
    <property type="term" value="C:plasma membrane"/>
    <property type="evidence" value="ECO:0007669"/>
    <property type="project" value="EnsemblFungi"/>
</dbReference>
<dbReference type="GO" id="GO:0004190">
    <property type="term" value="F:aspartic-type endopeptidase activity"/>
    <property type="evidence" value="ECO:0007669"/>
    <property type="project" value="UniProtKB-KW"/>
</dbReference>
<dbReference type="GO" id="GO:0031593">
    <property type="term" value="F:polyubiquitin modification-dependent protein binding"/>
    <property type="evidence" value="ECO:0007669"/>
    <property type="project" value="EnsemblFungi"/>
</dbReference>
<dbReference type="GO" id="GO:1904855">
    <property type="term" value="F:proteasome regulatory particle binding"/>
    <property type="evidence" value="ECO:0007669"/>
    <property type="project" value="EnsemblFungi"/>
</dbReference>
<dbReference type="GO" id="GO:0030674">
    <property type="term" value="F:protein-macromolecule adaptor activity"/>
    <property type="evidence" value="ECO:0007669"/>
    <property type="project" value="EnsemblFungi"/>
</dbReference>
<dbReference type="GO" id="GO:0000149">
    <property type="term" value="F:SNARE binding"/>
    <property type="evidence" value="ECO:0007669"/>
    <property type="project" value="EnsemblFungi"/>
</dbReference>
<dbReference type="GO" id="GO:0043130">
    <property type="term" value="F:ubiquitin binding"/>
    <property type="evidence" value="ECO:0007669"/>
    <property type="project" value="EnsemblFungi"/>
</dbReference>
<dbReference type="GO" id="GO:0045740">
    <property type="term" value="P:positive regulation of DNA replication"/>
    <property type="evidence" value="ECO:0007669"/>
    <property type="project" value="EnsemblFungi"/>
</dbReference>
<dbReference type="GO" id="GO:0009306">
    <property type="term" value="P:protein secretion"/>
    <property type="evidence" value="ECO:0007669"/>
    <property type="project" value="EnsemblFungi"/>
</dbReference>
<dbReference type="GO" id="GO:0043328">
    <property type="term" value="P:protein transport to vacuole involved in ubiquitin-dependent protein catabolic process via the multivesicular body sorting pathway"/>
    <property type="evidence" value="ECO:0007669"/>
    <property type="project" value="EnsemblFungi"/>
</dbReference>
<dbReference type="CDD" id="cd05479">
    <property type="entry name" value="RP_DDI"/>
    <property type="match status" value="1"/>
</dbReference>
<dbReference type="CDD" id="cd14309">
    <property type="entry name" value="UBA_scDdi1_like"/>
    <property type="match status" value="1"/>
</dbReference>
<dbReference type="CDD" id="cd01796">
    <property type="entry name" value="Ubl_Ddi1_like"/>
    <property type="match status" value="1"/>
</dbReference>
<dbReference type="Gene3D" id="2.40.70.10">
    <property type="entry name" value="Acid Proteases"/>
    <property type="match status" value="1"/>
</dbReference>
<dbReference type="Gene3D" id="1.10.8.10">
    <property type="entry name" value="DNA helicase RuvA subunit, C-terminal domain"/>
    <property type="match status" value="1"/>
</dbReference>
<dbReference type="Gene3D" id="3.10.20.90">
    <property type="entry name" value="Phosphatidylinositol 3-kinase Catalytic Subunit, Chain A, domain 1"/>
    <property type="match status" value="1"/>
</dbReference>
<dbReference type="InterPro" id="IPR033882">
    <property type="entry name" value="DDI1_N"/>
</dbReference>
<dbReference type="InterPro" id="IPR001995">
    <property type="entry name" value="Peptidase_A2_cat"/>
</dbReference>
<dbReference type="InterPro" id="IPR019103">
    <property type="entry name" value="Peptidase_aspartic_DDI1-type"/>
</dbReference>
<dbReference type="InterPro" id="IPR021109">
    <property type="entry name" value="Peptidase_aspartic_dom_sf"/>
</dbReference>
<dbReference type="InterPro" id="IPR015940">
    <property type="entry name" value="UBA"/>
</dbReference>
<dbReference type="InterPro" id="IPR009060">
    <property type="entry name" value="UBA-like_sf"/>
</dbReference>
<dbReference type="PANTHER" id="PTHR12917">
    <property type="entry name" value="ASPARTYL PROTEASE DDI-RELATED"/>
    <property type="match status" value="1"/>
</dbReference>
<dbReference type="PANTHER" id="PTHR12917:SF1">
    <property type="entry name" value="AT13091P"/>
    <property type="match status" value="1"/>
</dbReference>
<dbReference type="Pfam" id="PF09668">
    <property type="entry name" value="Asp_protease"/>
    <property type="match status" value="1"/>
</dbReference>
<dbReference type="Pfam" id="PF00627">
    <property type="entry name" value="UBA"/>
    <property type="match status" value="1"/>
</dbReference>
<dbReference type="SMART" id="SM00165">
    <property type="entry name" value="UBA"/>
    <property type="match status" value="1"/>
</dbReference>
<dbReference type="SUPFAM" id="SSF50630">
    <property type="entry name" value="Acid proteases"/>
    <property type="match status" value="1"/>
</dbReference>
<dbReference type="SUPFAM" id="SSF46934">
    <property type="entry name" value="UBA-like"/>
    <property type="match status" value="1"/>
</dbReference>
<dbReference type="PROSITE" id="PS50030">
    <property type="entry name" value="UBA"/>
    <property type="match status" value="1"/>
</dbReference>
<organism>
    <name type="scientific">Eremothecium gossypii (strain ATCC 10895 / CBS 109.51 / FGSC 9923 / NRRL Y-1056)</name>
    <name type="common">Yeast</name>
    <name type="synonym">Ashbya gossypii</name>
    <dbReference type="NCBI Taxonomy" id="284811"/>
    <lineage>
        <taxon>Eukaryota</taxon>
        <taxon>Fungi</taxon>
        <taxon>Dikarya</taxon>
        <taxon>Ascomycota</taxon>
        <taxon>Saccharomycotina</taxon>
        <taxon>Saccharomycetes</taxon>
        <taxon>Saccharomycetales</taxon>
        <taxon>Saccharomycetaceae</taxon>
        <taxon>Eremothecium</taxon>
    </lineage>
</organism>
<name>DDI1_EREGS</name>
<protein>
    <recommendedName>
        <fullName>DNA damage-inducible protein 1</fullName>
        <ecNumber evidence="2">3.4.23.-</ecNumber>
    </recommendedName>
</protein>
<gene>
    <name type="primary">DDI1</name>
    <name type="ordered locus">AFR010C</name>
</gene>
<sequence>MNVTVSNEVTDELLGPFELSDDITLMDFMALIDFDENEQALWHNMRQLKSVDREKTLMQLGIVGESLVVVKAIKKKATEGSTTRASKASAKAAKAAAKAAAVARDTPAEQATTVSPVAQVPVAVSPAVTAAVPTQPTSPSGGPAAANDIITPEDEYIETFRKSLLNSPSLASNIPIPGVNQLIQDSQLFKQLIGPVLLHRRAQQQAANQMGTAQSEYVKLMSNPDDPSNQARISELINQQEIDEQLHKAMEYTPEVFASVNMLYINMEINGHPVKAFVDSGAQSTIMSTALAERTGLGRLVDKRFRGIARGVGKGEIIGRVHAAQVKIETQFIPCSFIVLDTNVDLLLGLDMLRRYQACVDLKENVLKIAGIVTPFLPEAEIPKHFDMDPSAEATNLPSTSPLGNQKAAPEARDAGVGSALLNRSTPATAERTHAEEDVRRLMDLGFSRAEVLKALDHSQGNAEYAAAFLFQ</sequence>